<protein>
    <recommendedName>
        <fullName>Rho1 guanine nucleotide exchange factor 3</fullName>
    </recommendedName>
    <alternativeName>
        <fullName>Lethal at division protein 1</fullName>
    </alternativeName>
</protein>
<proteinExistence type="evidence at protein level"/>
<reference key="1">
    <citation type="journal article" date="2002" name="Nature">
        <title>The genome sequence of Schizosaccharomyces pombe.</title>
        <authorList>
            <person name="Wood V."/>
            <person name="Gwilliam R."/>
            <person name="Rajandream M.A."/>
            <person name="Lyne M.H."/>
            <person name="Lyne R."/>
            <person name="Stewart A."/>
            <person name="Sgouros J.G."/>
            <person name="Peat N."/>
            <person name="Hayles J."/>
            <person name="Baker S.G."/>
            <person name="Basham D."/>
            <person name="Bowman S."/>
            <person name="Brooks K."/>
            <person name="Brown D."/>
            <person name="Brown S."/>
            <person name="Chillingworth T."/>
            <person name="Churcher C.M."/>
            <person name="Collins M."/>
            <person name="Connor R."/>
            <person name="Cronin A."/>
            <person name="Davis P."/>
            <person name="Feltwell T."/>
            <person name="Fraser A."/>
            <person name="Gentles S."/>
            <person name="Goble A."/>
            <person name="Hamlin N."/>
            <person name="Harris D.E."/>
            <person name="Hidalgo J."/>
            <person name="Hodgson G."/>
            <person name="Holroyd S."/>
            <person name="Hornsby T."/>
            <person name="Howarth S."/>
            <person name="Huckle E.J."/>
            <person name="Hunt S."/>
            <person name="Jagels K."/>
            <person name="James K.D."/>
            <person name="Jones L."/>
            <person name="Jones M."/>
            <person name="Leather S."/>
            <person name="McDonald S."/>
            <person name="McLean J."/>
            <person name="Mooney P."/>
            <person name="Moule S."/>
            <person name="Mungall K.L."/>
            <person name="Murphy L.D."/>
            <person name="Niblett D."/>
            <person name="Odell C."/>
            <person name="Oliver K."/>
            <person name="O'Neil S."/>
            <person name="Pearson D."/>
            <person name="Quail M.A."/>
            <person name="Rabbinowitsch E."/>
            <person name="Rutherford K.M."/>
            <person name="Rutter S."/>
            <person name="Saunders D."/>
            <person name="Seeger K."/>
            <person name="Sharp S."/>
            <person name="Skelton J."/>
            <person name="Simmonds M.N."/>
            <person name="Squares R."/>
            <person name="Squares S."/>
            <person name="Stevens K."/>
            <person name="Taylor K."/>
            <person name="Taylor R.G."/>
            <person name="Tivey A."/>
            <person name="Walsh S.V."/>
            <person name="Warren T."/>
            <person name="Whitehead S."/>
            <person name="Woodward J.R."/>
            <person name="Volckaert G."/>
            <person name="Aert R."/>
            <person name="Robben J."/>
            <person name="Grymonprez B."/>
            <person name="Weltjens I."/>
            <person name="Vanstreels E."/>
            <person name="Rieger M."/>
            <person name="Schaefer M."/>
            <person name="Mueller-Auer S."/>
            <person name="Gabel C."/>
            <person name="Fuchs M."/>
            <person name="Duesterhoeft A."/>
            <person name="Fritzc C."/>
            <person name="Holzer E."/>
            <person name="Moestl D."/>
            <person name="Hilbert H."/>
            <person name="Borzym K."/>
            <person name="Langer I."/>
            <person name="Beck A."/>
            <person name="Lehrach H."/>
            <person name="Reinhardt R."/>
            <person name="Pohl T.M."/>
            <person name="Eger P."/>
            <person name="Zimmermann W."/>
            <person name="Wedler H."/>
            <person name="Wambutt R."/>
            <person name="Purnelle B."/>
            <person name="Goffeau A."/>
            <person name="Cadieu E."/>
            <person name="Dreano S."/>
            <person name="Gloux S."/>
            <person name="Lelaure V."/>
            <person name="Mottier S."/>
            <person name="Galibert F."/>
            <person name="Aves S.J."/>
            <person name="Xiang Z."/>
            <person name="Hunt C."/>
            <person name="Moore K."/>
            <person name="Hurst S.M."/>
            <person name="Lucas M."/>
            <person name="Rochet M."/>
            <person name="Gaillardin C."/>
            <person name="Tallada V.A."/>
            <person name="Garzon A."/>
            <person name="Thode G."/>
            <person name="Daga R.R."/>
            <person name="Cruzado L."/>
            <person name="Jimenez J."/>
            <person name="Sanchez M."/>
            <person name="del Rey F."/>
            <person name="Benito J."/>
            <person name="Dominguez A."/>
            <person name="Revuelta J.L."/>
            <person name="Moreno S."/>
            <person name="Armstrong J."/>
            <person name="Forsburg S.L."/>
            <person name="Cerutti L."/>
            <person name="Lowe T."/>
            <person name="McCombie W.R."/>
            <person name="Paulsen I."/>
            <person name="Potashkin J."/>
            <person name="Shpakovski G.V."/>
            <person name="Ussery D."/>
            <person name="Barrell B.G."/>
            <person name="Nurse P."/>
        </authorList>
    </citation>
    <scope>NUCLEOTIDE SEQUENCE [LARGE SCALE GENOMIC DNA]</scope>
    <source>
        <strain>972 / ATCC 24843</strain>
    </source>
</reference>
<reference key="2">
    <citation type="journal article" date="2004" name="J. Cell Sci.">
        <title>Schizosaccharomyces pombe Rgf3p is a specific Rho1 GEF that regulates cell wall beta-glucan biosynthesis through the GTPase Rho1p.</title>
        <authorList>
            <person name="Tajadura V."/>
            <person name="Garcia B."/>
            <person name="Garcia I."/>
            <person name="Garcia P."/>
            <person name="Sanchez Y."/>
        </authorList>
    </citation>
    <scope>FUNCTION</scope>
    <scope>SUBCELLULAR LOCATION</scope>
</reference>
<reference key="3">
    <citation type="journal article" date="2005" name="Genes Cells">
        <title>Rho1-GEFs Rgf1 and Rgf2 are involved in formation of cell wall and septum, while Rgf3 is involved in cytokinesis in fission yeast.</title>
        <authorList>
            <person name="Mutoh T."/>
            <person name="Nakano K."/>
            <person name="Mabuchi I."/>
        </authorList>
    </citation>
    <scope>FUNCTION</scope>
    <scope>SUBCELLULAR LOCATION</scope>
</reference>
<reference key="4">
    <citation type="journal article" date="2005" name="J. Cell Sci.">
        <title>Cell wall remodeling at the fission yeast cell division site requires the Rho-GEF Rgf3p.</title>
        <authorList>
            <person name="Morrell-Falvey J.L."/>
            <person name="Ren L."/>
            <person name="Feoktistova A."/>
            <person name="Haese G.D."/>
            <person name="Gould K.L."/>
        </authorList>
    </citation>
    <scope>FUNCTION</scope>
    <scope>SUBCELLULAR LOCATION</scope>
</reference>
<reference key="5">
    <citation type="journal article" date="2006" name="Nat. Biotechnol.">
        <title>ORFeome cloning and global analysis of protein localization in the fission yeast Schizosaccharomyces pombe.</title>
        <authorList>
            <person name="Matsuyama A."/>
            <person name="Arai R."/>
            <person name="Yashiroda Y."/>
            <person name="Shirai A."/>
            <person name="Kamata A."/>
            <person name="Sekido S."/>
            <person name="Kobayashi Y."/>
            <person name="Hashimoto A."/>
            <person name="Hamamoto M."/>
            <person name="Hiraoka Y."/>
            <person name="Horinouchi S."/>
            <person name="Yoshida M."/>
        </authorList>
    </citation>
    <scope>SUBCELLULAR LOCATION [LARGE SCALE ANALYSIS]</scope>
</reference>
<reference key="6">
    <citation type="journal article" date="2008" name="J. Proteome Res.">
        <title>Phosphoproteome analysis of fission yeast.</title>
        <authorList>
            <person name="Wilson-Grady J.T."/>
            <person name="Villen J."/>
            <person name="Gygi S.P."/>
        </authorList>
    </citation>
    <scope>PHOSPHORYLATION [LARGE SCALE ANALYSIS] AT SER-293</scope>
    <scope>IDENTIFICATION BY MASS SPECTROMETRY</scope>
</reference>
<feature type="chain" id="PRO_0000080972" description="Rho1 guanine nucleotide exchange factor 3">
    <location>
        <begin position="1"/>
        <end position="1275"/>
    </location>
</feature>
<feature type="domain" description="DH" evidence="1">
    <location>
        <begin position="465"/>
        <end position="657"/>
    </location>
</feature>
<feature type="domain" description="PH" evidence="2">
    <location>
        <begin position="692"/>
        <end position="855"/>
    </location>
</feature>
<feature type="domain" description="CNH" evidence="3">
    <location>
        <begin position="930"/>
        <end position="1239"/>
    </location>
</feature>
<feature type="region of interest" description="Disordered" evidence="4">
    <location>
        <begin position="1"/>
        <end position="42"/>
    </location>
</feature>
<feature type="region of interest" description="Disordered" evidence="4">
    <location>
        <begin position="56"/>
        <end position="113"/>
    </location>
</feature>
<feature type="region of interest" description="Disordered" evidence="4">
    <location>
        <begin position="131"/>
        <end position="188"/>
    </location>
</feature>
<feature type="region of interest" description="Disordered" evidence="4">
    <location>
        <begin position="214"/>
        <end position="248"/>
    </location>
</feature>
<feature type="compositionally biased region" description="Basic and acidic residues" evidence="4">
    <location>
        <begin position="7"/>
        <end position="17"/>
    </location>
</feature>
<feature type="compositionally biased region" description="Polar residues" evidence="4">
    <location>
        <begin position="32"/>
        <end position="42"/>
    </location>
</feature>
<feature type="compositionally biased region" description="Polar residues" evidence="4">
    <location>
        <begin position="80"/>
        <end position="113"/>
    </location>
</feature>
<feature type="compositionally biased region" description="Polar residues" evidence="4">
    <location>
        <begin position="142"/>
        <end position="151"/>
    </location>
</feature>
<feature type="compositionally biased region" description="Low complexity" evidence="4">
    <location>
        <begin position="178"/>
        <end position="188"/>
    </location>
</feature>
<feature type="compositionally biased region" description="Low complexity" evidence="4">
    <location>
        <begin position="214"/>
        <end position="228"/>
    </location>
</feature>
<feature type="modified residue" description="Phosphoserine" evidence="9">
    <location>
        <position position="293"/>
    </location>
</feature>
<gene>
    <name type="primary">rgf3</name>
    <name type="synonym">lad1</name>
    <name type="ORF">SPCC645.06c</name>
</gene>
<accession>Q9Y7U5</accession>
<name>RGF3_SCHPO</name>
<organism>
    <name type="scientific">Schizosaccharomyces pombe (strain 972 / ATCC 24843)</name>
    <name type="common">Fission yeast</name>
    <dbReference type="NCBI Taxonomy" id="284812"/>
    <lineage>
        <taxon>Eukaryota</taxon>
        <taxon>Fungi</taxon>
        <taxon>Dikarya</taxon>
        <taxon>Ascomycota</taxon>
        <taxon>Taphrinomycotina</taxon>
        <taxon>Schizosaccharomycetes</taxon>
        <taxon>Schizosaccharomycetales</taxon>
        <taxon>Schizosaccharomycetaceae</taxon>
        <taxon>Schizosaccharomyces</taxon>
    </lineage>
</organism>
<sequence length="1275" mass="144431">MKLSNELFHRSSKDHGGKSRICLDSSEDTYPPHSSSPPSFQKRLSFSDFSTTRLFSPPFLSKRSNNSPHRFSYSPPQHPASINSRRVASYTVQSSPSRTTYRQLPNEPQNSAAYTTYSSFPNALFDDFSPNNPLDTDPFLTSPGNKQNTVDSFRPLPETPVSPGGSLVHPLPRPPLPSSVSSHSSPYSTTSSTSLYSLYNDISLSCSPEPYLPLSPTRSPARTPSPIRLYSSDALRPQSPLSPSVEYLTPPNPYSLKSDISSTRQLPKIPVQDYASGKISSPLITRTHRRAQSETLFSSCREPWLVGKLYKWCKEEVFTALGGLVHEGVSRREVAQVMATLFTIHIASMEFLIAEIIAKNILGDWINYGLVEVINLEKLQIAFTSNEPPSGSGVLPFLTNGGCYSYICRSRSCPSKYQCYSCRCARNSSLEFTSLPGQSSDTWSIFWNISSLNSLPSSLSKREIARQNNIHELICKESDYVADLNTLAELFRDGIVQQQDAIVPSNRVADFIQSVFGNVESIRQLHSRLFLPQLIMRERLQGPVVSIIGDILLEWIHAAKSSYINYAKQFPLADETYKLECQRNTYFARWLAACRSDPRCRRLDFQHFLQRPTQRLQRYTLELDTILKHTEQSSWDFQLITQAVKELRATCEECDAVIATVLEANRIRDLSYQLLFKNHESVNLELRDPEREFFFEGIVQRRSDSRLDWLDIHLFLLDNYLIMAKARKDKRTNASRYVVSKRPIPLDLLVLSPKMDDFQLKSNTNKFLGSLAGNLPQESLTTKSKRKSKVNLELMFDATAEKNNENSMNSAVFEKSQLYPFTIRHLGAYTASYTLYVESLQLRKLWVEKINVAKKRHSQKINIKNPFALKVVSDVAFQYPPSDLVNGNEPLNSFNEITLVEGSSIDRALNEVAWKHPIVSEELLPEPIAYGDISCIAQFNDYEGHVSVLIATSTGIFLGAFGDSSDIRDWKKISSQRRVTQLGVVEEFDILLELRDKTLYAHKLSRIIEMGLIESKIAVVIGTPHAVSFFKIGKLSEGASVKRERTLVFYKEGLGNTTTIICCEPVIGLGHNYQKTYAFKRKDVTSFRTLDDFHVTANCHSIDCFKYSIALCHNKGIDVLRLDPKLAVGFPSPSVLNDTLFRNRINNSKPLGVFRIHDPSLFACCYQFGAVFVNGEGSMVNKECWFDWIGKPNSVTSCHGYLIAFNDEFVEIWNTRTRKLNQIIQGNDIKYYPSNSDWLANGKYIMFGMVHPQYHDRHLILALNKAKTNSFIIED</sequence>
<dbReference type="EMBL" id="CU329672">
    <property type="protein sequence ID" value="CAB39902.1"/>
    <property type="molecule type" value="Genomic_DNA"/>
</dbReference>
<dbReference type="PIR" id="T41523">
    <property type="entry name" value="T41523"/>
</dbReference>
<dbReference type="RefSeq" id="NP_588115.1">
    <property type="nucleotide sequence ID" value="NM_001023105.2"/>
</dbReference>
<dbReference type="SMR" id="Q9Y7U5"/>
<dbReference type="BioGRID" id="276000">
    <property type="interactions" value="21"/>
</dbReference>
<dbReference type="STRING" id="284812.Q9Y7U5"/>
<dbReference type="iPTMnet" id="Q9Y7U5"/>
<dbReference type="PaxDb" id="4896-SPCC645.06c.1"/>
<dbReference type="EnsemblFungi" id="SPCC645.06c.1">
    <property type="protein sequence ID" value="SPCC645.06c.1:pep"/>
    <property type="gene ID" value="SPCC645.06c"/>
</dbReference>
<dbReference type="GeneID" id="2539437"/>
<dbReference type="KEGG" id="spo:2539437"/>
<dbReference type="PomBase" id="SPCC645.06c">
    <property type="gene designation" value="rgf3"/>
</dbReference>
<dbReference type="VEuPathDB" id="FungiDB:SPCC645.06c"/>
<dbReference type="eggNOG" id="KOG4305">
    <property type="taxonomic scope" value="Eukaryota"/>
</dbReference>
<dbReference type="HOGENOM" id="CLU_001083_1_0_1"/>
<dbReference type="InParanoid" id="Q9Y7U5"/>
<dbReference type="OMA" id="HEIITWE"/>
<dbReference type="PhylomeDB" id="Q9Y7U5"/>
<dbReference type="PRO" id="PR:Q9Y7U5"/>
<dbReference type="Proteomes" id="UP000002485">
    <property type="component" value="Chromosome III"/>
</dbReference>
<dbReference type="GO" id="GO:0032153">
    <property type="term" value="C:cell division site"/>
    <property type="evidence" value="ECO:0000314"/>
    <property type="project" value="PomBase"/>
</dbReference>
<dbReference type="GO" id="GO:0071944">
    <property type="term" value="C:cell periphery"/>
    <property type="evidence" value="ECO:0000318"/>
    <property type="project" value="GO_Central"/>
</dbReference>
<dbReference type="GO" id="GO:0005737">
    <property type="term" value="C:cytoplasm"/>
    <property type="evidence" value="ECO:0000318"/>
    <property type="project" value="GO_Central"/>
</dbReference>
<dbReference type="GO" id="GO:0005829">
    <property type="term" value="C:cytosol"/>
    <property type="evidence" value="ECO:0007005"/>
    <property type="project" value="PomBase"/>
</dbReference>
<dbReference type="GO" id="GO:0000935">
    <property type="term" value="C:division septum"/>
    <property type="evidence" value="ECO:0000314"/>
    <property type="project" value="PomBase"/>
</dbReference>
<dbReference type="GO" id="GO:0031097">
    <property type="term" value="C:medial cortex"/>
    <property type="evidence" value="ECO:0000314"/>
    <property type="project" value="PomBase"/>
</dbReference>
<dbReference type="GO" id="GO:0110085">
    <property type="term" value="C:mitotic actomyosin contractile ring"/>
    <property type="evidence" value="ECO:0000314"/>
    <property type="project" value="PomBase"/>
</dbReference>
<dbReference type="GO" id="GO:0120105">
    <property type="term" value="C:mitotic actomyosin contractile ring, intermediate layer"/>
    <property type="evidence" value="ECO:0000314"/>
    <property type="project" value="PomBase"/>
</dbReference>
<dbReference type="GO" id="GO:0005085">
    <property type="term" value="F:guanyl-nucleotide exchange factor activity"/>
    <property type="evidence" value="ECO:0000316"/>
    <property type="project" value="PomBase"/>
</dbReference>
<dbReference type="GO" id="GO:0008289">
    <property type="term" value="F:lipid binding"/>
    <property type="evidence" value="ECO:0000255"/>
    <property type="project" value="PomBase"/>
</dbReference>
<dbReference type="GO" id="GO:0000917">
    <property type="term" value="P:division septum assembly"/>
    <property type="evidence" value="ECO:0007669"/>
    <property type="project" value="UniProtKB-KW"/>
</dbReference>
<dbReference type="GO" id="GO:0140281">
    <property type="term" value="P:positive regulation of mitotic division septum assembly"/>
    <property type="evidence" value="ECO:0000315"/>
    <property type="project" value="PomBase"/>
</dbReference>
<dbReference type="GO" id="GO:1903338">
    <property type="term" value="P:regulation of cell wall organization or biogenesis"/>
    <property type="evidence" value="ECO:0000318"/>
    <property type="project" value="GO_Central"/>
</dbReference>
<dbReference type="GO" id="GO:0140279">
    <property type="term" value="P:regulation of mitotic division septum assembly"/>
    <property type="evidence" value="ECO:0000315"/>
    <property type="project" value="PomBase"/>
</dbReference>
<dbReference type="GO" id="GO:0007264">
    <property type="term" value="P:small GTPase-mediated signal transduction"/>
    <property type="evidence" value="ECO:0000318"/>
    <property type="project" value="GO_Central"/>
</dbReference>
<dbReference type="CDD" id="cd00160">
    <property type="entry name" value="RhoGEF"/>
    <property type="match status" value="1"/>
</dbReference>
<dbReference type="Gene3D" id="1.20.900.10">
    <property type="entry name" value="Dbl homology (DH) domain"/>
    <property type="match status" value="1"/>
</dbReference>
<dbReference type="Gene3D" id="2.30.29.30">
    <property type="entry name" value="Pleckstrin-homology domain (PH domain)/Phosphotyrosine-binding domain (PTB)"/>
    <property type="match status" value="1"/>
</dbReference>
<dbReference type="InterPro" id="IPR001180">
    <property type="entry name" value="CNH_dom"/>
</dbReference>
<dbReference type="InterPro" id="IPR035899">
    <property type="entry name" value="DBL_dom_sf"/>
</dbReference>
<dbReference type="InterPro" id="IPR000219">
    <property type="entry name" value="DH_dom"/>
</dbReference>
<dbReference type="InterPro" id="IPR011993">
    <property type="entry name" value="PH-like_dom_sf"/>
</dbReference>
<dbReference type="InterPro" id="IPR041675">
    <property type="entry name" value="PH_5"/>
</dbReference>
<dbReference type="InterPro" id="IPR001849">
    <property type="entry name" value="PH_domain"/>
</dbReference>
<dbReference type="InterPro" id="IPR052233">
    <property type="entry name" value="Rho-type_GEFs"/>
</dbReference>
<dbReference type="PANTHER" id="PTHR46572">
    <property type="entry name" value="RHO1 GDP-GTP EXCHANGE PROTEIN 1-RELATED"/>
    <property type="match status" value="1"/>
</dbReference>
<dbReference type="PANTHER" id="PTHR46572:SF1">
    <property type="entry name" value="RHO1 GUANINE NUCLEOTIDE EXCHANGE FACTOR TUS1"/>
    <property type="match status" value="1"/>
</dbReference>
<dbReference type="Pfam" id="PF00780">
    <property type="entry name" value="CNH"/>
    <property type="match status" value="1"/>
</dbReference>
<dbReference type="Pfam" id="PF15405">
    <property type="entry name" value="PH_5"/>
    <property type="match status" value="1"/>
</dbReference>
<dbReference type="Pfam" id="PF00621">
    <property type="entry name" value="RhoGEF"/>
    <property type="match status" value="1"/>
</dbReference>
<dbReference type="Pfam" id="PF23582">
    <property type="entry name" value="WH_RGF3"/>
    <property type="match status" value="1"/>
</dbReference>
<dbReference type="SMART" id="SM00036">
    <property type="entry name" value="CNH"/>
    <property type="match status" value="1"/>
</dbReference>
<dbReference type="SMART" id="SM00233">
    <property type="entry name" value="PH"/>
    <property type="match status" value="1"/>
</dbReference>
<dbReference type="SMART" id="SM00325">
    <property type="entry name" value="RhoGEF"/>
    <property type="match status" value="1"/>
</dbReference>
<dbReference type="SUPFAM" id="SSF48065">
    <property type="entry name" value="DBL homology domain (DH-domain)"/>
    <property type="match status" value="1"/>
</dbReference>
<dbReference type="SUPFAM" id="SSF50729">
    <property type="entry name" value="PH domain-like"/>
    <property type="match status" value="1"/>
</dbReference>
<dbReference type="PROSITE" id="PS50219">
    <property type="entry name" value="CNH"/>
    <property type="match status" value="1"/>
</dbReference>
<dbReference type="PROSITE" id="PS50010">
    <property type="entry name" value="DH_2"/>
    <property type="match status" value="1"/>
</dbReference>
<dbReference type="PROSITE" id="PS50003">
    <property type="entry name" value="PH_DOMAIN"/>
    <property type="match status" value="1"/>
</dbReference>
<keyword id="KW-0131">Cell cycle</keyword>
<keyword id="KW-0132">Cell division</keyword>
<keyword id="KW-0963">Cytoplasm</keyword>
<keyword id="KW-0344">Guanine-nucleotide releasing factor</keyword>
<keyword id="KW-0597">Phosphoprotein</keyword>
<keyword id="KW-1185">Reference proteome</keyword>
<keyword id="KW-0717">Septation</keyword>
<evidence type="ECO:0000255" key="1">
    <source>
        <dbReference type="PROSITE-ProRule" id="PRU00062"/>
    </source>
</evidence>
<evidence type="ECO:0000255" key="2">
    <source>
        <dbReference type="PROSITE-ProRule" id="PRU00145"/>
    </source>
</evidence>
<evidence type="ECO:0000255" key="3">
    <source>
        <dbReference type="PROSITE-ProRule" id="PRU00795"/>
    </source>
</evidence>
<evidence type="ECO:0000256" key="4">
    <source>
        <dbReference type="SAM" id="MobiDB-lite"/>
    </source>
</evidence>
<evidence type="ECO:0000269" key="5">
    <source>
    </source>
</evidence>
<evidence type="ECO:0000269" key="6">
    <source>
    </source>
</evidence>
<evidence type="ECO:0000269" key="7">
    <source>
    </source>
</evidence>
<evidence type="ECO:0000269" key="8">
    <source>
    </source>
</evidence>
<evidence type="ECO:0000269" key="9">
    <source>
    </source>
</evidence>
<comment type="function">
    <text evidence="5 6 7">Stimulates the exchange of Rho1 GDP-bound form into GTP-bound form. Regulates, via interaction and activation of Rho1, beta-1,3-glucan biosynthesis and cell wall integrity during septation. Involved in the regulation of contractile ring assembly.</text>
</comment>
<comment type="subcellular location">
    <subcellularLocation>
        <location evidence="5 6 7 8">Cytoplasm</location>
    </subcellularLocation>
    <text>Localizes to the outer area (150 nm) of the contractile ring.</text>
</comment>